<geneLocation type="chloroplast"/>
<organism>
    <name type="scientific">Cyanidium caldarium</name>
    <name type="common">Red alga</name>
    <dbReference type="NCBI Taxonomy" id="2771"/>
    <lineage>
        <taxon>Eukaryota</taxon>
        <taxon>Rhodophyta</taxon>
        <taxon>Bangiophyceae</taxon>
        <taxon>Cyanidiales</taxon>
        <taxon>Cyanidiaceae</taxon>
        <taxon>Cyanidium</taxon>
    </lineage>
</organism>
<comment type="function">
    <text evidence="1">One of the components of the core complex of photosystem II (PSII). It binds chlorophyll and helps catalyze the primary light-induced photochemical processes of PSII. PSII is a light-driven water:plastoquinone oxidoreductase, using light energy to abstract electrons from H(2)O, generating O(2) and a proton gradient subsequently used for ATP formation.</text>
</comment>
<comment type="cofactor">
    <text evidence="1">Binds multiple chlorophylls. PSII binds additional chlorophylls, carotenoids and specific lipids.</text>
</comment>
<comment type="subunit">
    <text evidence="2">PSII is composed of 1 copy each of membrane proteins PsbA, PsbB, PsbC, PsbD, PsbE, PsbF, PsbH, PsbI, PsbJ, PsbK, PsbL, PsbM, PsbT, PsbY, PsbZ, Psb30/Ycf12, at least 3 peripheral proteins of the oxygen-evolving complex and a large number of cofactors. It forms dimeric complexes.</text>
</comment>
<comment type="subcellular location">
    <subcellularLocation>
        <location evidence="1">Plastid</location>
        <location evidence="1">Chloroplast thylakoid membrane</location>
        <topology evidence="1">Multi-pass membrane protein</topology>
    </subcellularLocation>
</comment>
<comment type="similarity">
    <text evidence="1">Belongs to the PsbB/PsbC family. PsbB subfamily.</text>
</comment>
<protein>
    <recommendedName>
        <fullName evidence="1">Photosystem II CP47 reaction center protein</fullName>
    </recommendedName>
    <alternativeName>
        <fullName evidence="1">PSII 47 kDa protein</fullName>
    </alternativeName>
    <alternativeName>
        <fullName evidence="1">Protein CP-47</fullName>
    </alternativeName>
</protein>
<keyword id="KW-0002">3D-structure</keyword>
<keyword id="KW-0148">Chlorophyll</keyword>
<keyword id="KW-0150">Chloroplast</keyword>
<keyword id="KW-0157">Chromophore</keyword>
<keyword id="KW-0472">Membrane</keyword>
<keyword id="KW-0602">Photosynthesis</keyword>
<keyword id="KW-0604">Photosystem II</keyword>
<keyword id="KW-0934">Plastid</keyword>
<keyword id="KW-0793">Thylakoid</keyword>
<keyword id="KW-0812">Transmembrane</keyword>
<keyword id="KW-1133">Transmembrane helix</keyword>
<reference key="1">
    <citation type="journal article" date="2000" name="J. Mol. Evol.">
        <title>The structure and gene repertoire of an ancient red algal plastid genome.</title>
        <authorList>
            <person name="Gloeckner G."/>
            <person name="Rosenthal A."/>
            <person name="Valentin K.-U."/>
        </authorList>
    </citation>
    <scope>NUCLEOTIDE SEQUENCE [LARGE SCALE GENOMIC DNA]</scope>
    <source>
        <strain>RK-1</strain>
    </source>
</reference>
<sequence length="509" mass="56562">MALPWYRVHTVVLNDPGRLISVHLMHTALVSGWAGSMALYELAVFDPSDPVLNPMWRQGMFVMPFMARLGVTDSWGGWSITGESVSNPGLWSFEGVALTHIVLSGLLFLASIWHWVYWDLDLFRDPRTLEPALDLPKVFGIHLVLSSLLCFGFGAFHVTGLFGPGIWISDAYGLTGRIQSVAPAWGPEGFNPFNPGGIASHHIAAGTVGILAGVFHLNVRPPQRLYRALRMGNIETVLSSSIAAVFFASFVVSGTMWYGAASTPIELFGPTRYQWDSGYFQQEIEKRVEESLSNGLSLPEAWSNIPDKLAFYDYIGNNPAKGGLFRAGPMNKGDGIAEAWLGHPVFQDKEGHELIVRRMPAFFENFPIILVDKDGIIRADIPFRRAESKYSIEQVGVTCSFYGGKLNNQSFKDASTVKKYARKAQFGEVFEFDRTILDSDGVFRSSPRGWFTFGHANFALLFFFGHLWHGSRTLFRDVFAGIGAEVTEQVEFGVFQKVGDKTTKKQGYV</sequence>
<feature type="chain" id="PRO_0000077479" description="Photosystem II CP47 reaction center protein">
    <location>
        <begin position="1"/>
        <end position="509"/>
    </location>
</feature>
<feature type="transmembrane region" description="Helical" evidence="1">
    <location>
        <begin position="21"/>
        <end position="36"/>
    </location>
</feature>
<feature type="transmembrane region" description="Helical" evidence="1">
    <location>
        <begin position="101"/>
        <end position="115"/>
    </location>
</feature>
<feature type="transmembrane region" description="Helical" evidence="1">
    <location>
        <begin position="140"/>
        <end position="156"/>
    </location>
</feature>
<feature type="transmembrane region" description="Helical" evidence="1">
    <location>
        <begin position="203"/>
        <end position="218"/>
    </location>
</feature>
<feature type="transmembrane region" description="Helical" evidence="1">
    <location>
        <begin position="237"/>
        <end position="252"/>
    </location>
</feature>
<feature type="transmembrane region" description="Helical" evidence="1">
    <location>
        <begin position="457"/>
        <end position="472"/>
    </location>
</feature>
<name>PSBB_CYACA</name>
<evidence type="ECO:0000255" key="1">
    <source>
        <dbReference type="HAMAP-Rule" id="MF_01495"/>
    </source>
</evidence>
<evidence type="ECO:0000305" key="2"/>
<proteinExistence type="evidence at protein level"/>
<gene>
    <name evidence="1" type="primary">psbB</name>
</gene>
<accession>O19928</accession>
<dbReference type="EMBL" id="AF022186">
    <property type="protein sequence ID" value="AAB82661.1"/>
    <property type="molecule type" value="Genomic_DNA"/>
</dbReference>
<dbReference type="PIR" id="T11996">
    <property type="entry name" value="T11996"/>
</dbReference>
<dbReference type="RefSeq" id="NP_045100.1">
    <property type="nucleotide sequence ID" value="NC_001840.1"/>
</dbReference>
<dbReference type="PDB" id="4YUU">
    <property type="method" value="X-ray"/>
    <property type="resolution" value="2.77 A"/>
    <property type="chains" value="B1/B2/b1/b2=1-509"/>
</dbReference>
<dbReference type="PDBsum" id="4YUU"/>
<dbReference type="SMR" id="O19928"/>
<dbReference type="GeneID" id="800168"/>
<dbReference type="GO" id="GO:0009535">
    <property type="term" value="C:chloroplast thylakoid membrane"/>
    <property type="evidence" value="ECO:0007669"/>
    <property type="project" value="UniProtKB-SubCell"/>
</dbReference>
<dbReference type="GO" id="GO:0009523">
    <property type="term" value="C:photosystem II"/>
    <property type="evidence" value="ECO:0007669"/>
    <property type="project" value="UniProtKB-KW"/>
</dbReference>
<dbReference type="GO" id="GO:0016168">
    <property type="term" value="F:chlorophyll binding"/>
    <property type="evidence" value="ECO:0007669"/>
    <property type="project" value="UniProtKB-UniRule"/>
</dbReference>
<dbReference type="GO" id="GO:0045156">
    <property type="term" value="F:electron transporter, transferring electrons within the cyclic electron transport pathway of photosynthesis activity"/>
    <property type="evidence" value="ECO:0007669"/>
    <property type="project" value="InterPro"/>
</dbReference>
<dbReference type="GO" id="GO:0009772">
    <property type="term" value="P:photosynthetic electron transport in photosystem II"/>
    <property type="evidence" value="ECO:0007669"/>
    <property type="project" value="InterPro"/>
</dbReference>
<dbReference type="Gene3D" id="3.10.680.10">
    <property type="entry name" value="Photosystem II CP47 reaction center protein"/>
    <property type="match status" value="1"/>
</dbReference>
<dbReference type="HAMAP" id="MF_01495">
    <property type="entry name" value="PSII_PsbB_CP47"/>
    <property type="match status" value="1"/>
</dbReference>
<dbReference type="InterPro" id="IPR000932">
    <property type="entry name" value="PS_antenna-like"/>
</dbReference>
<dbReference type="InterPro" id="IPR036001">
    <property type="entry name" value="PS_II_antenna-like_sf"/>
</dbReference>
<dbReference type="InterPro" id="IPR017486">
    <property type="entry name" value="PSII_PsbB"/>
</dbReference>
<dbReference type="NCBIfam" id="TIGR03039">
    <property type="entry name" value="PS_II_CP47"/>
    <property type="match status" value="1"/>
</dbReference>
<dbReference type="Pfam" id="PF00421">
    <property type="entry name" value="PSII"/>
    <property type="match status" value="1"/>
</dbReference>
<dbReference type="SUPFAM" id="SSF161077">
    <property type="entry name" value="Photosystem II antenna protein-like"/>
    <property type="match status" value="1"/>
</dbReference>